<name>RL32_LACAC</name>
<gene>
    <name evidence="1" type="primary">rpmF</name>
    <name type="ordered locus">LBA0952</name>
</gene>
<feature type="chain" id="PRO_0000225731" description="Large ribosomal subunit protein bL32">
    <location>
        <begin position="1"/>
        <end position="62"/>
    </location>
</feature>
<feature type="region of interest" description="Disordered" evidence="2">
    <location>
        <begin position="1"/>
        <end position="20"/>
    </location>
</feature>
<feature type="compositionally biased region" description="Basic residues" evidence="2">
    <location>
        <begin position="7"/>
        <end position="20"/>
    </location>
</feature>
<evidence type="ECO:0000255" key="1">
    <source>
        <dbReference type="HAMAP-Rule" id="MF_00340"/>
    </source>
</evidence>
<evidence type="ECO:0000256" key="2">
    <source>
        <dbReference type="SAM" id="MobiDB-lite"/>
    </source>
</evidence>
<evidence type="ECO:0000305" key="3"/>
<proteinExistence type="inferred from homology"/>
<keyword id="KW-1185">Reference proteome</keyword>
<keyword id="KW-0687">Ribonucleoprotein</keyword>
<keyword id="KW-0689">Ribosomal protein</keyword>
<comment type="similarity">
    <text evidence="1">Belongs to the bacterial ribosomal protein bL32 family.</text>
</comment>
<sequence length="62" mass="7079">MAVPARHTSKQKKRSRRGHIKLSVPAMHYDATTGEYRLSHRVSPKGYYKGRQVVNNNDNGNN</sequence>
<accession>Q5FKH0</accession>
<organism>
    <name type="scientific">Lactobacillus acidophilus (strain ATCC 700396 / NCK56 / N2 / NCFM)</name>
    <dbReference type="NCBI Taxonomy" id="272621"/>
    <lineage>
        <taxon>Bacteria</taxon>
        <taxon>Bacillati</taxon>
        <taxon>Bacillota</taxon>
        <taxon>Bacilli</taxon>
        <taxon>Lactobacillales</taxon>
        <taxon>Lactobacillaceae</taxon>
        <taxon>Lactobacillus</taxon>
    </lineage>
</organism>
<protein>
    <recommendedName>
        <fullName evidence="1">Large ribosomal subunit protein bL32</fullName>
    </recommendedName>
    <alternativeName>
        <fullName evidence="3">50S ribosomal protein L32</fullName>
    </alternativeName>
</protein>
<reference key="1">
    <citation type="journal article" date="2005" name="Proc. Natl. Acad. Sci. U.S.A.">
        <title>Complete genome sequence of the probiotic lactic acid bacterium Lactobacillus acidophilus NCFM.</title>
        <authorList>
            <person name="Altermann E."/>
            <person name="Russell W.M."/>
            <person name="Azcarate-Peril M.A."/>
            <person name="Barrangou R."/>
            <person name="Buck B.L."/>
            <person name="McAuliffe O."/>
            <person name="Souther N."/>
            <person name="Dobson A."/>
            <person name="Duong T."/>
            <person name="Callanan M."/>
            <person name="Lick S."/>
            <person name="Hamrick A."/>
            <person name="Cano R."/>
            <person name="Klaenhammer T.R."/>
        </authorList>
    </citation>
    <scope>NUCLEOTIDE SEQUENCE [LARGE SCALE GENOMIC DNA]</scope>
    <source>
        <strain>ATCC 700396 / NCK56 / N2 / NCFM</strain>
    </source>
</reference>
<dbReference type="EMBL" id="CP000033">
    <property type="protein sequence ID" value="AAV42804.1"/>
    <property type="molecule type" value="Genomic_DNA"/>
</dbReference>
<dbReference type="RefSeq" id="WP_003547064.1">
    <property type="nucleotide sequence ID" value="NC_006814.3"/>
</dbReference>
<dbReference type="RefSeq" id="YP_193835.1">
    <property type="nucleotide sequence ID" value="NC_006814.3"/>
</dbReference>
<dbReference type="SMR" id="Q5FKH0"/>
<dbReference type="STRING" id="272621.LBA0952"/>
<dbReference type="GeneID" id="93289933"/>
<dbReference type="KEGG" id="lac:LBA0952"/>
<dbReference type="PATRIC" id="fig|272621.13.peg.904"/>
<dbReference type="eggNOG" id="COG0333">
    <property type="taxonomic scope" value="Bacteria"/>
</dbReference>
<dbReference type="HOGENOM" id="CLU_129084_2_1_9"/>
<dbReference type="OrthoDB" id="9812874at2"/>
<dbReference type="BioCyc" id="LACI272621:G1G49-954-MONOMER"/>
<dbReference type="PRO" id="PR:Q5FKH0"/>
<dbReference type="Proteomes" id="UP000006381">
    <property type="component" value="Chromosome"/>
</dbReference>
<dbReference type="GO" id="GO:0015934">
    <property type="term" value="C:large ribosomal subunit"/>
    <property type="evidence" value="ECO:0007669"/>
    <property type="project" value="InterPro"/>
</dbReference>
<dbReference type="GO" id="GO:0003735">
    <property type="term" value="F:structural constituent of ribosome"/>
    <property type="evidence" value="ECO:0007669"/>
    <property type="project" value="InterPro"/>
</dbReference>
<dbReference type="GO" id="GO:0006412">
    <property type="term" value="P:translation"/>
    <property type="evidence" value="ECO:0007669"/>
    <property type="project" value="UniProtKB-UniRule"/>
</dbReference>
<dbReference type="HAMAP" id="MF_00340">
    <property type="entry name" value="Ribosomal_bL32"/>
    <property type="match status" value="1"/>
</dbReference>
<dbReference type="InterPro" id="IPR002677">
    <property type="entry name" value="Ribosomal_bL32"/>
</dbReference>
<dbReference type="InterPro" id="IPR044957">
    <property type="entry name" value="Ribosomal_bL32_bact"/>
</dbReference>
<dbReference type="InterPro" id="IPR011332">
    <property type="entry name" value="Ribosomal_zn-bd"/>
</dbReference>
<dbReference type="NCBIfam" id="TIGR01031">
    <property type="entry name" value="rpmF_bact"/>
    <property type="match status" value="1"/>
</dbReference>
<dbReference type="PANTHER" id="PTHR35534">
    <property type="entry name" value="50S RIBOSOMAL PROTEIN L32"/>
    <property type="match status" value="1"/>
</dbReference>
<dbReference type="PANTHER" id="PTHR35534:SF1">
    <property type="entry name" value="LARGE RIBOSOMAL SUBUNIT PROTEIN BL32"/>
    <property type="match status" value="1"/>
</dbReference>
<dbReference type="Pfam" id="PF01783">
    <property type="entry name" value="Ribosomal_L32p"/>
    <property type="match status" value="1"/>
</dbReference>
<dbReference type="SUPFAM" id="SSF57829">
    <property type="entry name" value="Zn-binding ribosomal proteins"/>
    <property type="match status" value="1"/>
</dbReference>